<gene>
    <name evidence="1" type="primary">pyrG</name>
    <name type="ordered locus">xcc-b100_2562</name>
</gene>
<organism>
    <name type="scientific">Xanthomonas campestris pv. campestris (strain B100)</name>
    <dbReference type="NCBI Taxonomy" id="509169"/>
    <lineage>
        <taxon>Bacteria</taxon>
        <taxon>Pseudomonadati</taxon>
        <taxon>Pseudomonadota</taxon>
        <taxon>Gammaproteobacteria</taxon>
        <taxon>Lysobacterales</taxon>
        <taxon>Lysobacteraceae</taxon>
        <taxon>Xanthomonas</taxon>
    </lineage>
</organism>
<dbReference type="EC" id="6.3.4.2" evidence="1"/>
<dbReference type="EMBL" id="AM920689">
    <property type="protein sequence ID" value="CAP51922.1"/>
    <property type="molecule type" value="Genomic_DNA"/>
</dbReference>
<dbReference type="SMR" id="B0RUK3"/>
<dbReference type="MEROPS" id="C26.964"/>
<dbReference type="KEGG" id="xca:xcc-b100_2562"/>
<dbReference type="HOGENOM" id="CLU_011675_5_0_6"/>
<dbReference type="UniPathway" id="UPA00159">
    <property type="reaction ID" value="UER00277"/>
</dbReference>
<dbReference type="Proteomes" id="UP000001188">
    <property type="component" value="Chromosome"/>
</dbReference>
<dbReference type="GO" id="GO:0005829">
    <property type="term" value="C:cytosol"/>
    <property type="evidence" value="ECO:0007669"/>
    <property type="project" value="TreeGrafter"/>
</dbReference>
<dbReference type="GO" id="GO:0005524">
    <property type="term" value="F:ATP binding"/>
    <property type="evidence" value="ECO:0007669"/>
    <property type="project" value="UniProtKB-KW"/>
</dbReference>
<dbReference type="GO" id="GO:0003883">
    <property type="term" value="F:CTP synthase activity"/>
    <property type="evidence" value="ECO:0007669"/>
    <property type="project" value="UniProtKB-UniRule"/>
</dbReference>
<dbReference type="GO" id="GO:0004359">
    <property type="term" value="F:glutaminase activity"/>
    <property type="evidence" value="ECO:0007669"/>
    <property type="project" value="RHEA"/>
</dbReference>
<dbReference type="GO" id="GO:0042802">
    <property type="term" value="F:identical protein binding"/>
    <property type="evidence" value="ECO:0007669"/>
    <property type="project" value="TreeGrafter"/>
</dbReference>
<dbReference type="GO" id="GO:0046872">
    <property type="term" value="F:metal ion binding"/>
    <property type="evidence" value="ECO:0007669"/>
    <property type="project" value="UniProtKB-KW"/>
</dbReference>
<dbReference type="GO" id="GO:0044210">
    <property type="term" value="P:'de novo' CTP biosynthetic process"/>
    <property type="evidence" value="ECO:0007669"/>
    <property type="project" value="UniProtKB-UniRule"/>
</dbReference>
<dbReference type="GO" id="GO:0019856">
    <property type="term" value="P:pyrimidine nucleobase biosynthetic process"/>
    <property type="evidence" value="ECO:0007669"/>
    <property type="project" value="TreeGrafter"/>
</dbReference>
<dbReference type="CDD" id="cd03113">
    <property type="entry name" value="CTPS_N"/>
    <property type="match status" value="1"/>
</dbReference>
<dbReference type="CDD" id="cd01746">
    <property type="entry name" value="GATase1_CTP_Synthase"/>
    <property type="match status" value="1"/>
</dbReference>
<dbReference type="FunFam" id="3.40.50.300:FF:000009">
    <property type="entry name" value="CTP synthase"/>
    <property type="match status" value="1"/>
</dbReference>
<dbReference type="FunFam" id="3.40.50.880:FF:000002">
    <property type="entry name" value="CTP synthase"/>
    <property type="match status" value="1"/>
</dbReference>
<dbReference type="Gene3D" id="3.40.50.880">
    <property type="match status" value="1"/>
</dbReference>
<dbReference type="Gene3D" id="3.40.50.300">
    <property type="entry name" value="P-loop containing nucleotide triphosphate hydrolases"/>
    <property type="match status" value="1"/>
</dbReference>
<dbReference type="HAMAP" id="MF_01227">
    <property type="entry name" value="PyrG"/>
    <property type="match status" value="1"/>
</dbReference>
<dbReference type="InterPro" id="IPR029062">
    <property type="entry name" value="Class_I_gatase-like"/>
</dbReference>
<dbReference type="InterPro" id="IPR004468">
    <property type="entry name" value="CTP_synthase"/>
</dbReference>
<dbReference type="InterPro" id="IPR017456">
    <property type="entry name" value="CTP_synthase_N"/>
</dbReference>
<dbReference type="InterPro" id="IPR017926">
    <property type="entry name" value="GATASE"/>
</dbReference>
<dbReference type="InterPro" id="IPR033828">
    <property type="entry name" value="GATase1_CTP_Synthase"/>
</dbReference>
<dbReference type="InterPro" id="IPR027417">
    <property type="entry name" value="P-loop_NTPase"/>
</dbReference>
<dbReference type="NCBIfam" id="NF003792">
    <property type="entry name" value="PRK05380.1"/>
    <property type="match status" value="1"/>
</dbReference>
<dbReference type="NCBIfam" id="TIGR00337">
    <property type="entry name" value="PyrG"/>
    <property type="match status" value="1"/>
</dbReference>
<dbReference type="PANTHER" id="PTHR11550">
    <property type="entry name" value="CTP SYNTHASE"/>
    <property type="match status" value="1"/>
</dbReference>
<dbReference type="PANTHER" id="PTHR11550:SF0">
    <property type="entry name" value="CTP SYNTHASE-RELATED"/>
    <property type="match status" value="1"/>
</dbReference>
<dbReference type="Pfam" id="PF06418">
    <property type="entry name" value="CTP_synth_N"/>
    <property type="match status" value="1"/>
</dbReference>
<dbReference type="Pfam" id="PF00117">
    <property type="entry name" value="GATase"/>
    <property type="match status" value="1"/>
</dbReference>
<dbReference type="SUPFAM" id="SSF52317">
    <property type="entry name" value="Class I glutamine amidotransferase-like"/>
    <property type="match status" value="1"/>
</dbReference>
<dbReference type="SUPFAM" id="SSF52540">
    <property type="entry name" value="P-loop containing nucleoside triphosphate hydrolases"/>
    <property type="match status" value="1"/>
</dbReference>
<dbReference type="PROSITE" id="PS51273">
    <property type="entry name" value="GATASE_TYPE_1"/>
    <property type="match status" value="1"/>
</dbReference>
<name>PYRG_XANCB</name>
<proteinExistence type="inferred from homology"/>
<feature type="chain" id="PRO_1000139602" description="CTP synthase">
    <location>
        <begin position="1"/>
        <end position="554"/>
    </location>
</feature>
<feature type="domain" description="Glutamine amidotransferase type-1" evidence="1">
    <location>
        <begin position="292"/>
        <end position="545"/>
    </location>
</feature>
<feature type="region of interest" description="Amidoligase domain" evidence="1">
    <location>
        <begin position="1"/>
        <end position="265"/>
    </location>
</feature>
<feature type="active site" description="Nucleophile; for glutamine hydrolysis" evidence="1">
    <location>
        <position position="380"/>
    </location>
</feature>
<feature type="active site" evidence="1">
    <location>
        <position position="518"/>
    </location>
</feature>
<feature type="active site" evidence="1">
    <location>
        <position position="520"/>
    </location>
</feature>
<feature type="binding site" evidence="1">
    <location>
        <position position="13"/>
    </location>
    <ligand>
        <name>CTP</name>
        <dbReference type="ChEBI" id="CHEBI:37563"/>
        <note>allosteric inhibitor</note>
    </ligand>
</feature>
<feature type="binding site" evidence="1">
    <location>
        <position position="13"/>
    </location>
    <ligand>
        <name>UTP</name>
        <dbReference type="ChEBI" id="CHEBI:46398"/>
    </ligand>
</feature>
<feature type="binding site" evidence="1">
    <location>
        <begin position="14"/>
        <end position="19"/>
    </location>
    <ligand>
        <name>ATP</name>
        <dbReference type="ChEBI" id="CHEBI:30616"/>
    </ligand>
</feature>
<feature type="binding site" evidence="1">
    <location>
        <position position="71"/>
    </location>
    <ligand>
        <name>ATP</name>
        <dbReference type="ChEBI" id="CHEBI:30616"/>
    </ligand>
</feature>
<feature type="binding site" evidence="1">
    <location>
        <position position="71"/>
    </location>
    <ligand>
        <name>Mg(2+)</name>
        <dbReference type="ChEBI" id="CHEBI:18420"/>
    </ligand>
</feature>
<feature type="binding site" evidence="1">
    <location>
        <position position="139"/>
    </location>
    <ligand>
        <name>Mg(2+)</name>
        <dbReference type="ChEBI" id="CHEBI:18420"/>
    </ligand>
</feature>
<feature type="binding site" evidence="1">
    <location>
        <begin position="146"/>
        <end position="148"/>
    </location>
    <ligand>
        <name>CTP</name>
        <dbReference type="ChEBI" id="CHEBI:37563"/>
        <note>allosteric inhibitor</note>
    </ligand>
</feature>
<feature type="binding site" evidence="1">
    <location>
        <begin position="186"/>
        <end position="191"/>
    </location>
    <ligand>
        <name>CTP</name>
        <dbReference type="ChEBI" id="CHEBI:37563"/>
        <note>allosteric inhibitor</note>
    </ligand>
</feature>
<feature type="binding site" evidence="1">
    <location>
        <begin position="186"/>
        <end position="191"/>
    </location>
    <ligand>
        <name>UTP</name>
        <dbReference type="ChEBI" id="CHEBI:46398"/>
    </ligand>
</feature>
<feature type="binding site" evidence="1">
    <location>
        <position position="222"/>
    </location>
    <ligand>
        <name>CTP</name>
        <dbReference type="ChEBI" id="CHEBI:37563"/>
        <note>allosteric inhibitor</note>
    </ligand>
</feature>
<feature type="binding site" evidence="1">
    <location>
        <position position="222"/>
    </location>
    <ligand>
        <name>UTP</name>
        <dbReference type="ChEBI" id="CHEBI:46398"/>
    </ligand>
</feature>
<feature type="binding site" evidence="1">
    <location>
        <position position="353"/>
    </location>
    <ligand>
        <name>L-glutamine</name>
        <dbReference type="ChEBI" id="CHEBI:58359"/>
    </ligand>
</feature>
<feature type="binding site" evidence="1">
    <location>
        <begin position="381"/>
        <end position="384"/>
    </location>
    <ligand>
        <name>L-glutamine</name>
        <dbReference type="ChEBI" id="CHEBI:58359"/>
    </ligand>
</feature>
<feature type="binding site" evidence="1">
    <location>
        <position position="404"/>
    </location>
    <ligand>
        <name>L-glutamine</name>
        <dbReference type="ChEBI" id="CHEBI:58359"/>
    </ligand>
</feature>
<feature type="binding site" evidence="1">
    <location>
        <position position="471"/>
    </location>
    <ligand>
        <name>L-glutamine</name>
        <dbReference type="ChEBI" id="CHEBI:58359"/>
    </ligand>
</feature>
<keyword id="KW-0067">ATP-binding</keyword>
<keyword id="KW-0315">Glutamine amidotransferase</keyword>
<keyword id="KW-0436">Ligase</keyword>
<keyword id="KW-0460">Magnesium</keyword>
<keyword id="KW-0479">Metal-binding</keyword>
<keyword id="KW-0547">Nucleotide-binding</keyword>
<keyword id="KW-0665">Pyrimidine biosynthesis</keyword>
<reference key="1">
    <citation type="journal article" date="2008" name="J. Biotechnol.">
        <title>The genome of Xanthomonas campestris pv. campestris B100 and its use for the reconstruction of metabolic pathways involved in xanthan biosynthesis.</title>
        <authorList>
            <person name="Vorhoelter F.-J."/>
            <person name="Schneiker S."/>
            <person name="Goesmann A."/>
            <person name="Krause L."/>
            <person name="Bekel T."/>
            <person name="Kaiser O."/>
            <person name="Linke B."/>
            <person name="Patschkowski T."/>
            <person name="Rueckert C."/>
            <person name="Schmid J."/>
            <person name="Sidhu V.K."/>
            <person name="Sieber V."/>
            <person name="Tauch A."/>
            <person name="Watt S.A."/>
            <person name="Weisshaar B."/>
            <person name="Becker A."/>
            <person name="Niehaus K."/>
            <person name="Puehler A."/>
        </authorList>
    </citation>
    <scope>NUCLEOTIDE SEQUENCE [LARGE SCALE GENOMIC DNA]</scope>
    <source>
        <strain>B100</strain>
    </source>
</reference>
<sequence length="554" mass="61528">MTPLIFVTGGVVSSLGKGIAAASLASILEARGLKVTMMKLDPYINVDPGTMSPFQHGEVYVTDDGAETDLDLGHYERYVRTRLSRKNSVTTGRIYENVIRKERRGDYLGATVQVIPHITDEIRRCIDEATAGFDVALIEIGGTVGDIESLPFLEAIRQVRTERGAEKAMFMHLTLVPYIAAAGELKTKPTQHSVKELRSIGIQPDVLLCRSEQAVPDSERRKIALFTNVSERAVISCPDIDVLYGMPLELRRQGLDELVIDQFKLRDKVATADLSEWEAVVDAVKHPLDEVTIAVVGKYVDHQDAYKSVAEALKHGGLRQRTKVNLTWLEAQDLEGSDMAALQGIDGILVPGGFGDRGFEGKVQTSKYAREHKVPYFGICYGMQAAVVDYARHVADLDAANSTENDRQSPHPVIGLITEWRTATGEVEKRDEKSDLGGTMRLGLQEQRLKPGTLAREVYGKDVVAERHRHRYEFNNRYRTQLEDAGLVISGKSMDDTLVEMVELPRDTHPWFLACQAHPEFLSTPRDGHPLFIGFVRAAREKKAGGKLLKEARA</sequence>
<evidence type="ECO:0000255" key="1">
    <source>
        <dbReference type="HAMAP-Rule" id="MF_01227"/>
    </source>
</evidence>
<protein>
    <recommendedName>
        <fullName evidence="1">CTP synthase</fullName>
        <ecNumber evidence="1">6.3.4.2</ecNumber>
    </recommendedName>
    <alternativeName>
        <fullName evidence="1">Cytidine 5'-triphosphate synthase</fullName>
    </alternativeName>
    <alternativeName>
        <fullName evidence="1">Cytidine triphosphate synthetase</fullName>
        <shortName evidence="1">CTP synthetase</shortName>
        <shortName evidence="1">CTPS</shortName>
    </alternativeName>
    <alternativeName>
        <fullName evidence="1">UTP--ammonia ligase</fullName>
    </alternativeName>
</protein>
<comment type="function">
    <text evidence="1">Catalyzes the ATP-dependent amination of UTP to CTP with either L-glutamine or ammonia as the source of nitrogen. Regulates intracellular CTP levels through interactions with the four ribonucleotide triphosphates.</text>
</comment>
<comment type="catalytic activity">
    <reaction evidence="1">
        <text>UTP + L-glutamine + ATP + H2O = CTP + L-glutamate + ADP + phosphate + 2 H(+)</text>
        <dbReference type="Rhea" id="RHEA:26426"/>
        <dbReference type="ChEBI" id="CHEBI:15377"/>
        <dbReference type="ChEBI" id="CHEBI:15378"/>
        <dbReference type="ChEBI" id="CHEBI:29985"/>
        <dbReference type="ChEBI" id="CHEBI:30616"/>
        <dbReference type="ChEBI" id="CHEBI:37563"/>
        <dbReference type="ChEBI" id="CHEBI:43474"/>
        <dbReference type="ChEBI" id="CHEBI:46398"/>
        <dbReference type="ChEBI" id="CHEBI:58359"/>
        <dbReference type="ChEBI" id="CHEBI:456216"/>
        <dbReference type="EC" id="6.3.4.2"/>
    </reaction>
</comment>
<comment type="catalytic activity">
    <reaction evidence="1">
        <text>L-glutamine + H2O = L-glutamate + NH4(+)</text>
        <dbReference type="Rhea" id="RHEA:15889"/>
        <dbReference type="ChEBI" id="CHEBI:15377"/>
        <dbReference type="ChEBI" id="CHEBI:28938"/>
        <dbReference type="ChEBI" id="CHEBI:29985"/>
        <dbReference type="ChEBI" id="CHEBI:58359"/>
    </reaction>
</comment>
<comment type="catalytic activity">
    <reaction evidence="1">
        <text>UTP + NH4(+) + ATP = CTP + ADP + phosphate + 2 H(+)</text>
        <dbReference type="Rhea" id="RHEA:16597"/>
        <dbReference type="ChEBI" id="CHEBI:15378"/>
        <dbReference type="ChEBI" id="CHEBI:28938"/>
        <dbReference type="ChEBI" id="CHEBI:30616"/>
        <dbReference type="ChEBI" id="CHEBI:37563"/>
        <dbReference type="ChEBI" id="CHEBI:43474"/>
        <dbReference type="ChEBI" id="CHEBI:46398"/>
        <dbReference type="ChEBI" id="CHEBI:456216"/>
    </reaction>
</comment>
<comment type="activity regulation">
    <text evidence="1">Allosterically activated by GTP, when glutamine is the substrate; GTP has no effect on the reaction when ammonia is the substrate. The allosteric effector GTP functions by stabilizing the protein conformation that binds the tetrahedral intermediate(s) formed during glutamine hydrolysis. Inhibited by the product CTP, via allosteric rather than competitive inhibition.</text>
</comment>
<comment type="pathway">
    <text evidence="1">Pyrimidine metabolism; CTP biosynthesis via de novo pathway; CTP from UDP: step 2/2.</text>
</comment>
<comment type="subunit">
    <text evidence="1">Homotetramer.</text>
</comment>
<comment type="miscellaneous">
    <text evidence="1">CTPSs have evolved a hybrid strategy for distinguishing between UTP and CTP. The overlapping regions of the product feedback inhibitory and substrate sites recognize a common feature in both compounds, the triphosphate moiety. To differentiate isosteric substrate and product pyrimidine rings, an additional pocket far from the expected kinase/ligase catalytic site, specifically recognizes the cytosine and ribose portions of the product inhibitor.</text>
</comment>
<comment type="similarity">
    <text evidence="1">Belongs to the CTP synthase family.</text>
</comment>
<accession>B0RUK3</accession>